<name>YOR3_BPSPP</name>
<accession>Q38439</accession>
<organism>
    <name type="scientific">Bacillus phage SPP1</name>
    <name type="common">Bacteriophage SPP1</name>
    <dbReference type="NCBI Taxonomy" id="10724"/>
    <lineage>
        <taxon>Viruses</taxon>
        <taxon>Duplodnaviria</taxon>
        <taxon>Heunggongvirae</taxon>
        <taxon>Uroviricota</taxon>
        <taxon>Caudoviricetes</taxon>
    </lineage>
</organism>
<organismHost>
    <name type="scientific">Bacillus subtilis</name>
    <dbReference type="NCBI Taxonomy" id="1423"/>
</organismHost>
<feature type="chain" id="PRO_0000077794" description="Uncharacterized 8.5 kDa protein in GP2-GP6 intergenic region">
    <location>
        <begin position="1"/>
        <end position="71"/>
    </location>
</feature>
<proteinExistence type="predicted"/>
<sequence>MGIVKKILRMTGLEKHDYVRYMGKNYKCLKCGHDLYIPKHNEFHYTVKEFRGCKGEQRMKKVKRHRNGGYA</sequence>
<reference key="1">
    <citation type="journal article" date="1992" name="J. Mol. Biol.">
        <title>Molecular analysis of the Bacillus subtilis bacteriophage SPP1 region encompassing genes 1 to 6. The products of gene 1 and gene 2 are required for pac cleavage.</title>
        <authorList>
            <person name="Chai S."/>
            <person name="Bravo A."/>
            <person name="Lueder G."/>
            <person name="Nedlin A."/>
            <person name="Trautner T.A."/>
            <person name="Alonso J.C."/>
        </authorList>
    </citation>
    <scope>NUCLEOTIDE SEQUENCE [GENOMIC DNA]</scope>
</reference>
<reference key="2">
    <citation type="journal article" date="1997" name="Gene">
        <title>The complete nucleotide sequence and functional organization of Bacillus subtilis bacteriophage SPP1.</title>
        <authorList>
            <person name="Alonso J.C."/>
            <person name="Luder G."/>
            <person name="Stiege A.C."/>
            <person name="Chai S."/>
            <person name="Weise F."/>
            <person name="Trautner T.A."/>
        </authorList>
    </citation>
    <scope>NUCLEOTIDE SEQUENCE [LARGE SCALE GENOMIC DNA]</scope>
</reference>
<dbReference type="EMBL" id="X56064">
    <property type="protein sequence ID" value="CAA39538.1"/>
    <property type="molecule type" value="Genomic_DNA"/>
</dbReference>
<dbReference type="EMBL" id="X97918">
    <property type="protein sequence ID" value="CAA66576.1"/>
    <property type="molecule type" value="Genomic_DNA"/>
</dbReference>
<dbReference type="PIR" id="S24452">
    <property type="entry name" value="S24452"/>
</dbReference>
<dbReference type="RefSeq" id="NP_690657.1">
    <property type="nucleotide sequence ID" value="NC_004166.2"/>
</dbReference>
<dbReference type="GeneID" id="955267"/>
<dbReference type="KEGG" id="vg:955267"/>
<dbReference type="Proteomes" id="UP000002559">
    <property type="component" value="Genome"/>
</dbReference>
<keyword id="KW-1185">Reference proteome</keyword>
<protein>
    <recommendedName>
        <fullName>Uncharacterized 8.5 kDa protein in GP2-GP6 intergenic region</fullName>
    </recommendedName>
    <alternativeName>
        <fullName>ORF 3</fullName>
    </alternativeName>
</protein>